<accession>A8AGR9</accession>
<proteinExistence type="inferred from homology"/>
<gene>
    <name type="primary">marC</name>
    <name type="ordered locus">CKO_01550</name>
</gene>
<dbReference type="EMBL" id="CP000822">
    <property type="protein sequence ID" value="ABV12682.1"/>
    <property type="molecule type" value="Genomic_DNA"/>
</dbReference>
<dbReference type="RefSeq" id="WP_012132423.1">
    <property type="nucleotide sequence ID" value="NC_009792.1"/>
</dbReference>
<dbReference type="STRING" id="290338.CKO_01550"/>
<dbReference type="GeneID" id="45135613"/>
<dbReference type="KEGG" id="cko:CKO_01550"/>
<dbReference type="HOGENOM" id="CLU_079909_2_0_6"/>
<dbReference type="OrthoDB" id="21094at2"/>
<dbReference type="Proteomes" id="UP000008148">
    <property type="component" value="Chromosome"/>
</dbReference>
<dbReference type="GO" id="GO:0005886">
    <property type="term" value="C:plasma membrane"/>
    <property type="evidence" value="ECO:0007669"/>
    <property type="project" value="UniProtKB-SubCell"/>
</dbReference>
<dbReference type="InterPro" id="IPR002771">
    <property type="entry name" value="Multi_antbiot-R_MarC"/>
</dbReference>
<dbReference type="NCBIfam" id="TIGR00427">
    <property type="entry name" value="NAAT family transporter"/>
    <property type="match status" value="1"/>
</dbReference>
<dbReference type="NCBIfam" id="NF008228">
    <property type="entry name" value="PRK10995.1"/>
    <property type="match status" value="1"/>
</dbReference>
<dbReference type="PANTHER" id="PTHR33508:SF2">
    <property type="entry name" value="UPF0056 INNER MEMBRANE PROTEIN MARC"/>
    <property type="match status" value="1"/>
</dbReference>
<dbReference type="PANTHER" id="PTHR33508">
    <property type="entry name" value="UPF0056 MEMBRANE PROTEIN YHCE"/>
    <property type="match status" value="1"/>
</dbReference>
<dbReference type="Pfam" id="PF01914">
    <property type="entry name" value="MarC"/>
    <property type="match status" value="1"/>
</dbReference>
<sequence>MMDLFKAIGLGLVVLLPLANPLTTVALFLGLAGNMNSAERNRQSLMASVYVFAIMMVAYYAGQLVMNTFGISIPGLRIAGGLIVAFIGFRMLFPQQKAHESPEAKSKSEELEDEPSANIAFVPLAMPSTAGPGTIAMIISSASTVRHGVDFPGWVILVAPPLIFLAVSVILWGSLRSSGAIMRLVGKGGIEAISRLMGFLLVCMGVQFIINGVLEIIKTYH</sequence>
<feature type="chain" id="PRO_0000343811" description="UPF0056 inner membrane protein MarC">
    <location>
        <begin position="1"/>
        <end position="221"/>
    </location>
</feature>
<feature type="topological domain" description="Periplasmic" evidence="2">
    <location>
        <begin position="1"/>
        <end position="7"/>
    </location>
</feature>
<feature type="transmembrane region" description="Helical" evidence="2">
    <location>
        <begin position="8"/>
        <end position="28"/>
    </location>
</feature>
<feature type="topological domain" description="Cytoplasmic" evidence="2">
    <location>
        <begin position="29"/>
        <end position="44"/>
    </location>
</feature>
<feature type="transmembrane region" description="Helical" evidence="2">
    <location>
        <begin position="45"/>
        <end position="65"/>
    </location>
</feature>
<feature type="topological domain" description="Periplasmic" evidence="2">
    <location>
        <begin position="66"/>
        <end position="68"/>
    </location>
</feature>
<feature type="transmembrane region" description="Helical" evidence="2">
    <location>
        <begin position="69"/>
        <end position="89"/>
    </location>
</feature>
<feature type="topological domain" description="Cytoplasmic" evidence="2">
    <location>
        <begin position="90"/>
        <end position="118"/>
    </location>
</feature>
<feature type="transmembrane region" description="Helical" evidence="2">
    <location>
        <begin position="119"/>
        <end position="139"/>
    </location>
</feature>
<feature type="topological domain" description="Periplasmic" evidence="2">
    <location>
        <begin position="140"/>
        <end position="150"/>
    </location>
</feature>
<feature type="transmembrane region" description="Helical" evidence="2">
    <location>
        <begin position="151"/>
        <end position="171"/>
    </location>
</feature>
<feature type="topological domain" description="Cytoplasmic" evidence="2">
    <location>
        <begin position="172"/>
        <end position="196"/>
    </location>
</feature>
<feature type="transmembrane region" description="Helical" evidence="2">
    <location>
        <begin position="197"/>
        <end position="217"/>
    </location>
</feature>
<feature type="topological domain" description="Periplasmic" evidence="2">
    <location>
        <begin position="218"/>
        <end position="221"/>
    </location>
</feature>
<evidence type="ECO:0000250" key="1"/>
<evidence type="ECO:0000255" key="2"/>
<evidence type="ECO:0000305" key="3"/>
<organism>
    <name type="scientific">Citrobacter koseri (strain ATCC BAA-895 / CDC 4225-83 / SGSC4696)</name>
    <dbReference type="NCBI Taxonomy" id="290338"/>
    <lineage>
        <taxon>Bacteria</taxon>
        <taxon>Pseudomonadati</taxon>
        <taxon>Pseudomonadota</taxon>
        <taxon>Gammaproteobacteria</taxon>
        <taxon>Enterobacterales</taxon>
        <taxon>Enterobacteriaceae</taxon>
        <taxon>Citrobacter</taxon>
    </lineage>
</organism>
<name>MARC_CITK8</name>
<reference key="1">
    <citation type="submission" date="2007-08" db="EMBL/GenBank/DDBJ databases">
        <authorList>
            <consortium name="The Citrobacter koseri Genome Sequencing Project"/>
            <person name="McClelland M."/>
            <person name="Sanderson E.K."/>
            <person name="Porwollik S."/>
            <person name="Spieth J."/>
            <person name="Clifton W.S."/>
            <person name="Latreille P."/>
            <person name="Courtney L."/>
            <person name="Wang C."/>
            <person name="Pepin K."/>
            <person name="Bhonagiri V."/>
            <person name="Nash W."/>
            <person name="Johnson M."/>
            <person name="Thiruvilangam P."/>
            <person name="Wilson R."/>
        </authorList>
    </citation>
    <scope>NUCLEOTIDE SEQUENCE [LARGE SCALE GENOMIC DNA]</scope>
    <source>
        <strain>ATCC BAA-895 / CDC 4225-83 / SGSC4696</strain>
    </source>
</reference>
<protein>
    <recommendedName>
        <fullName>UPF0056 inner membrane protein MarC</fullName>
    </recommendedName>
</protein>
<comment type="subcellular location">
    <subcellularLocation>
        <location evidence="1">Cell inner membrane</location>
        <topology evidence="1">Multi-pass membrane protein</topology>
    </subcellularLocation>
</comment>
<comment type="similarity">
    <text evidence="3">Belongs to the UPF0056 (MarC) family.</text>
</comment>
<keyword id="KW-0997">Cell inner membrane</keyword>
<keyword id="KW-1003">Cell membrane</keyword>
<keyword id="KW-0472">Membrane</keyword>
<keyword id="KW-1185">Reference proteome</keyword>
<keyword id="KW-0812">Transmembrane</keyword>
<keyword id="KW-1133">Transmembrane helix</keyword>